<gene>
    <name evidence="1" type="primary">glgX</name>
    <name type="ordered locus">YpsIP31758_4005</name>
</gene>
<evidence type="ECO:0000255" key="1">
    <source>
        <dbReference type="HAMAP-Rule" id="MF_01248"/>
    </source>
</evidence>
<name>GLGX_YERP3</name>
<comment type="function">
    <text evidence="1">Removes maltotriose and maltotetraose chains that are attached by 1,6-alpha-linkage to the limit dextrin main chain, generating a debranched limit dextrin.</text>
</comment>
<comment type="catalytic activity">
    <reaction evidence="1">
        <text>Hydrolysis of (1-&gt;6)-alpha-D-glucosidic linkages to branches with degrees of polymerization of three or four glucose residues in limit dextrin.</text>
        <dbReference type="EC" id="3.2.1.196"/>
    </reaction>
</comment>
<comment type="pathway">
    <text evidence="1">Glycan degradation; glycogen degradation.</text>
</comment>
<comment type="similarity">
    <text evidence="1">Belongs to the glycosyl hydrolase 13 family.</text>
</comment>
<accession>A7FNX4</accession>
<protein>
    <recommendedName>
        <fullName evidence="1">Glycogen debranching enzyme</fullName>
        <ecNumber evidence="1">3.2.1.196</ecNumber>
    </recommendedName>
    <alternativeName>
        <fullName evidence="1">Limit dextrin alpha-1,6-maltotetraose-hydrolase</fullName>
    </alternativeName>
</protein>
<feature type="chain" id="PRO_1000067110" description="Glycogen debranching enzyme">
    <location>
        <begin position="1"/>
        <end position="662"/>
    </location>
</feature>
<feature type="active site" description="Nucleophile" evidence="1">
    <location>
        <position position="338"/>
    </location>
</feature>
<feature type="active site" description="Proton donor" evidence="1">
    <location>
        <position position="373"/>
    </location>
</feature>
<feature type="site" description="Transition state stabilizer" evidence="1">
    <location>
        <position position="445"/>
    </location>
</feature>
<organism>
    <name type="scientific">Yersinia pseudotuberculosis serotype O:1b (strain IP 31758)</name>
    <dbReference type="NCBI Taxonomy" id="349747"/>
    <lineage>
        <taxon>Bacteria</taxon>
        <taxon>Pseudomonadati</taxon>
        <taxon>Pseudomonadota</taxon>
        <taxon>Gammaproteobacteria</taxon>
        <taxon>Enterobacterales</taxon>
        <taxon>Yersiniaceae</taxon>
        <taxon>Yersinia</taxon>
    </lineage>
</organism>
<sequence length="662" mass="73938">MAVLTHGSPTPSGAYFDGKGINFTLFSAHAEQVTLCLFDEQGQERQIAMPARTGDIWHGYLPGGKPGQRYGYRVSGPFDPSRGHRFNPHKLLIDPRTRALEGKVGDDPRFTGGVSQPDVRDSAAALPKCLVIHEEYDWQGDKPPAIPWGNTVIYEAHVRGLTQLHPDIPPELRGTYAALAHPALIEHLKTLGITTLELLPVQFHIDEPRLQKMGLSNYWGYNVLAPFAVDPDYASGREGISPLRELRDAIKALHNAGIEVILDVVFNHSAELDVFGPTLCQRGIDNASYYWLTPDGEYDNITGCGNALRLSHPYVTQWVIDCLNYWRDSCHVDGFRFDLGTVLGRTPAFDQHAPLFAALAADERLSACKLIAEPWDIGLGGYQLGNFPTGFSEWNDQYRDAMRGFWLRGEVPRGTFAQHFAASSRLFEQRGRLPSASINQITAHDGFTLLDLLCFNQKHNQMNGEENRDGSDNNHSNNFGCEGLVADAAIWQRRKACQRALLTTLLLSQGTPMLLAGDEQGHSQQGNNNAYCQNNILTWLDWGSADRALMTFTADLIRLRQQIPALTQDQWWQSGDSNVQWLDSQGQALSDAAWEQGCQQQLQILLSQRWLVLINATDHECEMHLPEGEWEGIPPFGVSDHAERLTTWRGSAHTICVLIKRD</sequence>
<proteinExistence type="inferred from homology"/>
<reference key="1">
    <citation type="journal article" date="2007" name="PLoS Genet.">
        <title>The complete genome sequence of Yersinia pseudotuberculosis IP31758, the causative agent of Far East scarlet-like fever.</title>
        <authorList>
            <person name="Eppinger M."/>
            <person name="Rosovitz M.J."/>
            <person name="Fricke W.F."/>
            <person name="Rasko D.A."/>
            <person name="Kokorina G."/>
            <person name="Fayolle C."/>
            <person name="Lindler L.E."/>
            <person name="Carniel E."/>
            <person name="Ravel J."/>
        </authorList>
    </citation>
    <scope>NUCLEOTIDE SEQUENCE [LARGE SCALE GENOMIC DNA]</scope>
    <source>
        <strain>IP 31758</strain>
    </source>
</reference>
<keyword id="KW-0119">Carbohydrate metabolism</keyword>
<keyword id="KW-0321">Glycogen metabolism</keyword>
<keyword id="KW-0326">Glycosidase</keyword>
<keyword id="KW-0378">Hydrolase</keyword>
<dbReference type="EC" id="3.2.1.196" evidence="1"/>
<dbReference type="EMBL" id="CP000720">
    <property type="protein sequence ID" value="ABS47528.1"/>
    <property type="molecule type" value="Genomic_DNA"/>
</dbReference>
<dbReference type="RefSeq" id="WP_012105900.1">
    <property type="nucleotide sequence ID" value="NC_009708.1"/>
</dbReference>
<dbReference type="SMR" id="A7FNX4"/>
<dbReference type="CAZy" id="CBM48">
    <property type="family name" value="Carbohydrate-Binding Module Family 48"/>
</dbReference>
<dbReference type="CAZy" id="GH13">
    <property type="family name" value="Glycoside Hydrolase Family 13"/>
</dbReference>
<dbReference type="KEGG" id="ypi:YpsIP31758_4005"/>
<dbReference type="HOGENOM" id="CLU_011725_1_1_6"/>
<dbReference type="UniPathway" id="UPA00165"/>
<dbReference type="Proteomes" id="UP000002412">
    <property type="component" value="Chromosome"/>
</dbReference>
<dbReference type="GO" id="GO:0004133">
    <property type="term" value="F:glycogen debranching enzyme activity"/>
    <property type="evidence" value="ECO:0007669"/>
    <property type="project" value="UniProtKB-UniRule"/>
</dbReference>
<dbReference type="GO" id="GO:0004553">
    <property type="term" value="F:hydrolase activity, hydrolyzing O-glycosyl compounds"/>
    <property type="evidence" value="ECO:0007669"/>
    <property type="project" value="InterPro"/>
</dbReference>
<dbReference type="GO" id="GO:0005980">
    <property type="term" value="P:glycogen catabolic process"/>
    <property type="evidence" value="ECO:0007669"/>
    <property type="project" value="UniProtKB-UniRule"/>
</dbReference>
<dbReference type="CDD" id="cd11326">
    <property type="entry name" value="AmyAc_Glg_debranch"/>
    <property type="match status" value="1"/>
</dbReference>
<dbReference type="CDD" id="cd02856">
    <property type="entry name" value="E_set_GDE_Isoamylase_N"/>
    <property type="match status" value="1"/>
</dbReference>
<dbReference type="Gene3D" id="3.20.20.80">
    <property type="entry name" value="Glycosidases"/>
    <property type="match status" value="1"/>
</dbReference>
<dbReference type="Gene3D" id="2.60.40.1180">
    <property type="entry name" value="Golgi alpha-mannosidase II"/>
    <property type="match status" value="1"/>
</dbReference>
<dbReference type="Gene3D" id="2.60.40.10">
    <property type="entry name" value="Immunoglobulins"/>
    <property type="match status" value="1"/>
</dbReference>
<dbReference type="HAMAP" id="MF_01248">
    <property type="entry name" value="GlgX"/>
    <property type="match status" value="1"/>
</dbReference>
<dbReference type="InterPro" id="IPR040784">
    <property type="entry name" value="GlgX_C"/>
</dbReference>
<dbReference type="InterPro" id="IPR044505">
    <property type="entry name" value="GlgX_Isoamylase_N_E_set"/>
</dbReference>
<dbReference type="InterPro" id="IPR006047">
    <property type="entry name" value="Glyco_hydro_13_cat_dom"/>
</dbReference>
<dbReference type="InterPro" id="IPR004193">
    <property type="entry name" value="Glyco_hydro_13_N"/>
</dbReference>
<dbReference type="InterPro" id="IPR013780">
    <property type="entry name" value="Glyco_hydro_b"/>
</dbReference>
<dbReference type="InterPro" id="IPR022844">
    <property type="entry name" value="Glycogen_debranch_bac"/>
</dbReference>
<dbReference type="InterPro" id="IPR011837">
    <property type="entry name" value="Glycogen_debranch_GlgX"/>
</dbReference>
<dbReference type="InterPro" id="IPR017853">
    <property type="entry name" value="Glycoside_hydrolase_SF"/>
</dbReference>
<dbReference type="InterPro" id="IPR013783">
    <property type="entry name" value="Ig-like_fold"/>
</dbReference>
<dbReference type="InterPro" id="IPR014756">
    <property type="entry name" value="Ig_E-set"/>
</dbReference>
<dbReference type="NCBIfam" id="TIGR02100">
    <property type="entry name" value="glgX_debranch"/>
    <property type="match status" value="1"/>
</dbReference>
<dbReference type="NCBIfam" id="NF002983">
    <property type="entry name" value="PRK03705.1"/>
    <property type="match status" value="1"/>
</dbReference>
<dbReference type="PANTHER" id="PTHR43002">
    <property type="entry name" value="GLYCOGEN DEBRANCHING ENZYME"/>
    <property type="match status" value="1"/>
</dbReference>
<dbReference type="Pfam" id="PF02922">
    <property type="entry name" value="CBM_48"/>
    <property type="match status" value="1"/>
</dbReference>
<dbReference type="Pfam" id="PF18390">
    <property type="entry name" value="GlgX_C"/>
    <property type="match status" value="1"/>
</dbReference>
<dbReference type="SMART" id="SM00642">
    <property type="entry name" value="Aamy"/>
    <property type="match status" value="1"/>
</dbReference>
<dbReference type="SUPFAM" id="SSF51445">
    <property type="entry name" value="(Trans)glycosidases"/>
    <property type="match status" value="1"/>
</dbReference>
<dbReference type="SUPFAM" id="SSF81296">
    <property type="entry name" value="E set domains"/>
    <property type="match status" value="1"/>
</dbReference>
<dbReference type="SUPFAM" id="SSF51011">
    <property type="entry name" value="Glycosyl hydrolase domain"/>
    <property type="match status" value="1"/>
</dbReference>